<organism>
    <name type="scientific">Rattus norvegicus</name>
    <name type="common">Rat</name>
    <dbReference type="NCBI Taxonomy" id="10116"/>
    <lineage>
        <taxon>Eukaryota</taxon>
        <taxon>Metazoa</taxon>
        <taxon>Chordata</taxon>
        <taxon>Craniata</taxon>
        <taxon>Vertebrata</taxon>
        <taxon>Euteleostomi</taxon>
        <taxon>Mammalia</taxon>
        <taxon>Eutheria</taxon>
        <taxon>Euarchontoglires</taxon>
        <taxon>Glires</taxon>
        <taxon>Rodentia</taxon>
        <taxon>Myomorpha</taxon>
        <taxon>Muroidea</taxon>
        <taxon>Muridae</taxon>
        <taxon>Murinae</taxon>
        <taxon>Rattus</taxon>
    </lineage>
</organism>
<dbReference type="EMBL" id="AABR03003407">
    <property type="status" value="NOT_ANNOTATED_CDS"/>
    <property type="molecule type" value="Genomic_DNA"/>
</dbReference>
<dbReference type="EMBL" id="BN000520">
    <property type="protein sequence ID" value="CAG34290.1"/>
    <property type="molecule type" value="Genomic_DNA"/>
</dbReference>
<dbReference type="RefSeq" id="NP_001027015.1">
    <property type="nucleotide sequence ID" value="NM_001031845.1"/>
</dbReference>
<dbReference type="RefSeq" id="XP_006230635.1">
    <property type="nucleotide sequence ID" value="XM_006230573.5"/>
</dbReference>
<dbReference type="FunCoup" id="Q5BIV7">
    <property type="interactions" value="2"/>
</dbReference>
<dbReference type="STRING" id="10116.ENSRNOP00000025609"/>
<dbReference type="GlyCosmos" id="Q5BIV7">
    <property type="glycosylation" value="1 site, No reported glycans"/>
</dbReference>
<dbReference type="GlyGen" id="Q5BIV7">
    <property type="glycosylation" value="1 site"/>
</dbReference>
<dbReference type="PhosphoSitePlus" id="Q5BIV7"/>
<dbReference type="PaxDb" id="10116-ENSRNOP00000025609"/>
<dbReference type="Ensembl" id="ENSRNOT00000116404.1">
    <property type="protein sequence ID" value="ENSRNOP00000094166.1"/>
    <property type="gene ID" value="ENSRNOG00000067971.1"/>
</dbReference>
<dbReference type="GeneID" id="541462"/>
<dbReference type="KEGG" id="rno:541462"/>
<dbReference type="UCSC" id="RGD:1561845">
    <property type="organism name" value="rat"/>
</dbReference>
<dbReference type="AGR" id="RGD:1561845"/>
<dbReference type="CTD" id="503542"/>
<dbReference type="RGD" id="1561845">
    <property type="gene designation" value="Sprn"/>
</dbReference>
<dbReference type="eggNOG" id="ENOG502SCEE">
    <property type="taxonomic scope" value="Eukaryota"/>
</dbReference>
<dbReference type="GeneTree" id="ENSGT00730000111694"/>
<dbReference type="HOGENOM" id="CLU_1776846_0_0_1"/>
<dbReference type="InParanoid" id="Q5BIV7"/>
<dbReference type="OMA" id="MNWAPAT"/>
<dbReference type="OrthoDB" id="92399at9989"/>
<dbReference type="TreeFam" id="TF330766"/>
<dbReference type="Reactome" id="R-RNO-163125">
    <property type="pathway name" value="Post-translational modification: synthesis of GPI-anchored proteins"/>
</dbReference>
<dbReference type="PRO" id="PR:Q5BIV7"/>
<dbReference type="Proteomes" id="UP000002494">
    <property type="component" value="Chromosome 1"/>
</dbReference>
<dbReference type="Bgee" id="ENSRNOG00000018927">
    <property type="expression patterns" value="Expressed in frontal cortex and 13 other cell types or tissues"/>
</dbReference>
<dbReference type="GO" id="GO:0005829">
    <property type="term" value="C:cytosol"/>
    <property type="evidence" value="ECO:0000266"/>
    <property type="project" value="RGD"/>
</dbReference>
<dbReference type="GO" id="GO:0016020">
    <property type="term" value="C:membrane"/>
    <property type="evidence" value="ECO:0000266"/>
    <property type="project" value="RGD"/>
</dbReference>
<dbReference type="GO" id="GO:0005730">
    <property type="term" value="C:nucleolus"/>
    <property type="evidence" value="ECO:0000266"/>
    <property type="project" value="RGD"/>
</dbReference>
<dbReference type="GO" id="GO:0005634">
    <property type="term" value="C:nucleus"/>
    <property type="evidence" value="ECO:0000266"/>
    <property type="project" value="RGD"/>
</dbReference>
<dbReference type="GO" id="GO:0005886">
    <property type="term" value="C:plasma membrane"/>
    <property type="evidence" value="ECO:0000266"/>
    <property type="project" value="RGD"/>
</dbReference>
<dbReference type="GO" id="GO:0098552">
    <property type="term" value="C:side of membrane"/>
    <property type="evidence" value="ECO:0007669"/>
    <property type="project" value="UniProtKB-KW"/>
</dbReference>
<dbReference type="GO" id="GO:0031982">
    <property type="term" value="C:vesicle"/>
    <property type="evidence" value="ECO:0000266"/>
    <property type="project" value="RGD"/>
</dbReference>
<dbReference type="GO" id="GO:0003676">
    <property type="term" value="F:nucleic acid binding"/>
    <property type="evidence" value="ECO:0000266"/>
    <property type="project" value="RGD"/>
</dbReference>
<dbReference type="GO" id="GO:0006606">
    <property type="term" value="P:protein import into nucleus"/>
    <property type="evidence" value="ECO:0000266"/>
    <property type="project" value="RGD"/>
</dbReference>
<dbReference type="InterPro" id="IPR029238">
    <property type="entry name" value="Shadoo"/>
</dbReference>
<dbReference type="PANTHER" id="PTHR28552">
    <property type="entry name" value="SHADOW OF PRION PROTEIN"/>
    <property type="match status" value="1"/>
</dbReference>
<dbReference type="PANTHER" id="PTHR28552:SF1">
    <property type="entry name" value="SHADOW OF PRION PROTEIN"/>
    <property type="match status" value="1"/>
</dbReference>
<dbReference type="Pfam" id="PF14999">
    <property type="entry name" value="Shadoo"/>
    <property type="match status" value="1"/>
</dbReference>
<name>SPRN_RAT</name>
<comment type="function">
    <text evidence="1">Prion-like protein that has PrP(C)-like neuroprotective activity. May act as a modulator for the biological actions of normal and abnormal PrP (By similarity).</text>
</comment>
<comment type="subcellular location">
    <subcellularLocation>
        <location evidence="1">Cell membrane</location>
        <topology evidence="1">Lipid-anchor</topology>
        <topology evidence="1">GPI-anchor</topology>
    </subcellularLocation>
</comment>
<comment type="tissue specificity">
    <text evidence="4">Almost exclusively expressed in brain, with weak expression in lung and stomach.</text>
</comment>
<comment type="PTM">
    <text evidence="1">N-glycosylated.</text>
</comment>
<comment type="similarity">
    <text evidence="5">Belongs to the SPRN family.</text>
</comment>
<protein>
    <recommendedName>
        <fullName>Shadow of prion protein</fullName>
        <shortName>Protein shadoo</shortName>
    </recommendedName>
</protein>
<keyword id="KW-0034">Amyloid</keyword>
<keyword id="KW-1003">Cell membrane</keyword>
<keyword id="KW-0325">Glycoprotein</keyword>
<keyword id="KW-0336">GPI-anchor</keyword>
<keyword id="KW-0449">Lipoprotein</keyword>
<keyword id="KW-0472">Membrane</keyword>
<keyword id="KW-0640">Prion</keyword>
<keyword id="KW-1185">Reference proteome</keyword>
<keyword id="KW-0732">Signal</keyword>
<gene>
    <name type="primary">Sprn</name>
</gene>
<sequence>MNWTTATCWALLLATAFLCDSCSAKGGRGGARGSARGVRGGARGASRVRVRPAPRYSSSLRVAAAGAAAGAAAGVAAGLATGSGWRRTSGPGELGLEDDENGAMGGNGTDRGVYSYWAWTSGSGSVHSPRICLLLSGTLGALELLRP</sequence>
<reference key="1">
    <citation type="journal article" date="2004" name="Nature">
        <title>Genome sequence of the Brown Norway rat yields insights into mammalian evolution.</title>
        <authorList>
            <person name="Gibbs R.A."/>
            <person name="Weinstock G.M."/>
            <person name="Metzker M.L."/>
            <person name="Muzny D.M."/>
            <person name="Sodergren E.J."/>
            <person name="Scherer S."/>
            <person name="Scott G."/>
            <person name="Steffen D."/>
            <person name="Worley K.C."/>
            <person name="Burch P.E."/>
            <person name="Okwuonu G."/>
            <person name="Hines S."/>
            <person name="Lewis L."/>
            <person name="Deramo C."/>
            <person name="Delgado O."/>
            <person name="Dugan-Rocha S."/>
            <person name="Miner G."/>
            <person name="Morgan M."/>
            <person name="Hawes A."/>
            <person name="Gill R."/>
            <person name="Holt R.A."/>
            <person name="Adams M.D."/>
            <person name="Amanatides P.G."/>
            <person name="Baden-Tillson H."/>
            <person name="Barnstead M."/>
            <person name="Chin S."/>
            <person name="Evans C.A."/>
            <person name="Ferriera S."/>
            <person name="Fosler C."/>
            <person name="Glodek A."/>
            <person name="Gu Z."/>
            <person name="Jennings D."/>
            <person name="Kraft C.L."/>
            <person name="Nguyen T."/>
            <person name="Pfannkoch C.M."/>
            <person name="Sitter C."/>
            <person name="Sutton G.G."/>
            <person name="Venter J.C."/>
            <person name="Woodage T."/>
            <person name="Smith D."/>
            <person name="Lee H.-M."/>
            <person name="Gustafson E."/>
            <person name="Cahill P."/>
            <person name="Kana A."/>
            <person name="Doucette-Stamm L."/>
            <person name="Weinstock K."/>
            <person name="Fechtel K."/>
            <person name="Weiss R.B."/>
            <person name="Dunn D.M."/>
            <person name="Green E.D."/>
            <person name="Blakesley R.W."/>
            <person name="Bouffard G.G."/>
            <person name="De Jong P.J."/>
            <person name="Osoegawa K."/>
            <person name="Zhu B."/>
            <person name="Marra M."/>
            <person name="Schein J."/>
            <person name="Bosdet I."/>
            <person name="Fjell C."/>
            <person name="Jones S."/>
            <person name="Krzywinski M."/>
            <person name="Mathewson C."/>
            <person name="Siddiqui A."/>
            <person name="Wye N."/>
            <person name="McPherson J."/>
            <person name="Zhao S."/>
            <person name="Fraser C.M."/>
            <person name="Shetty J."/>
            <person name="Shatsman S."/>
            <person name="Geer K."/>
            <person name="Chen Y."/>
            <person name="Abramzon S."/>
            <person name="Nierman W.C."/>
            <person name="Havlak P.H."/>
            <person name="Chen R."/>
            <person name="Durbin K.J."/>
            <person name="Egan A."/>
            <person name="Ren Y."/>
            <person name="Song X.-Z."/>
            <person name="Li B."/>
            <person name="Liu Y."/>
            <person name="Qin X."/>
            <person name="Cawley S."/>
            <person name="Cooney A.J."/>
            <person name="D'Souza L.M."/>
            <person name="Martin K."/>
            <person name="Wu J.Q."/>
            <person name="Gonzalez-Garay M.L."/>
            <person name="Jackson A.R."/>
            <person name="Kalafus K.J."/>
            <person name="McLeod M.P."/>
            <person name="Milosavljevic A."/>
            <person name="Virk D."/>
            <person name="Volkov A."/>
            <person name="Wheeler D.A."/>
            <person name="Zhang Z."/>
            <person name="Bailey J.A."/>
            <person name="Eichler E.E."/>
            <person name="Tuzun E."/>
            <person name="Birney E."/>
            <person name="Mongin E."/>
            <person name="Ureta-Vidal A."/>
            <person name="Woodwark C."/>
            <person name="Zdobnov E."/>
            <person name="Bork P."/>
            <person name="Suyama M."/>
            <person name="Torrents D."/>
            <person name="Alexandersson M."/>
            <person name="Trask B.J."/>
            <person name="Young J.M."/>
            <person name="Huang H."/>
            <person name="Wang H."/>
            <person name="Xing H."/>
            <person name="Daniels S."/>
            <person name="Gietzen D."/>
            <person name="Schmidt J."/>
            <person name="Stevens K."/>
            <person name="Vitt U."/>
            <person name="Wingrove J."/>
            <person name="Camara F."/>
            <person name="Mar Alba M."/>
            <person name="Abril J.F."/>
            <person name="Guigo R."/>
            <person name="Smit A."/>
            <person name="Dubchak I."/>
            <person name="Rubin E.M."/>
            <person name="Couronne O."/>
            <person name="Poliakov A."/>
            <person name="Huebner N."/>
            <person name="Ganten D."/>
            <person name="Goesele C."/>
            <person name="Hummel O."/>
            <person name="Kreitler T."/>
            <person name="Lee Y.-A."/>
            <person name="Monti J."/>
            <person name="Schulz H."/>
            <person name="Zimdahl H."/>
            <person name="Himmelbauer H."/>
            <person name="Lehrach H."/>
            <person name="Jacob H.J."/>
            <person name="Bromberg S."/>
            <person name="Gullings-Handley J."/>
            <person name="Jensen-Seaman M.I."/>
            <person name="Kwitek A.E."/>
            <person name="Lazar J."/>
            <person name="Pasko D."/>
            <person name="Tonellato P.J."/>
            <person name="Twigger S."/>
            <person name="Ponting C.P."/>
            <person name="Duarte J.M."/>
            <person name="Rice S."/>
            <person name="Goodstadt L."/>
            <person name="Beatson S.A."/>
            <person name="Emes R.D."/>
            <person name="Winter E.E."/>
            <person name="Webber C."/>
            <person name="Brandt P."/>
            <person name="Nyakatura G."/>
            <person name="Adetobi M."/>
            <person name="Chiaromonte F."/>
            <person name="Elnitski L."/>
            <person name="Eswara P."/>
            <person name="Hardison R.C."/>
            <person name="Hou M."/>
            <person name="Kolbe D."/>
            <person name="Makova K."/>
            <person name="Miller W."/>
            <person name="Nekrutenko A."/>
            <person name="Riemer C."/>
            <person name="Schwartz S."/>
            <person name="Taylor J."/>
            <person name="Yang S."/>
            <person name="Zhang Y."/>
            <person name="Lindpaintner K."/>
            <person name="Andrews T.D."/>
            <person name="Caccamo M."/>
            <person name="Clamp M."/>
            <person name="Clarke L."/>
            <person name="Curwen V."/>
            <person name="Durbin R.M."/>
            <person name="Eyras E."/>
            <person name="Searle S.M."/>
            <person name="Cooper G.M."/>
            <person name="Batzoglou S."/>
            <person name="Brudno M."/>
            <person name="Sidow A."/>
            <person name="Stone E.A."/>
            <person name="Payseur B.A."/>
            <person name="Bourque G."/>
            <person name="Lopez-Otin C."/>
            <person name="Puente X.S."/>
            <person name="Chakrabarti K."/>
            <person name="Chatterji S."/>
            <person name="Dewey C."/>
            <person name="Pachter L."/>
            <person name="Bray N."/>
            <person name="Yap V.B."/>
            <person name="Caspi A."/>
            <person name="Tesler G."/>
            <person name="Pevzner P.A."/>
            <person name="Haussler D."/>
            <person name="Roskin K.M."/>
            <person name="Baertsch R."/>
            <person name="Clawson H."/>
            <person name="Furey T.S."/>
            <person name="Hinrichs A.S."/>
            <person name="Karolchik D."/>
            <person name="Kent W.J."/>
            <person name="Rosenbloom K.R."/>
            <person name="Trumbower H."/>
            <person name="Weirauch M."/>
            <person name="Cooper D.N."/>
            <person name="Stenson P.D."/>
            <person name="Ma B."/>
            <person name="Brent M."/>
            <person name="Arumugam M."/>
            <person name="Shteynberg D."/>
            <person name="Copley R.R."/>
            <person name="Taylor M.S."/>
            <person name="Riethman H."/>
            <person name="Mudunuri U."/>
            <person name="Peterson J."/>
            <person name="Guyer M."/>
            <person name="Felsenfeld A."/>
            <person name="Old S."/>
            <person name="Mockrin S."/>
            <person name="Collins F.S."/>
        </authorList>
    </citation>
    <scope>NUCLEOTIDE SEQUENCE [LARGE SCALE GENOMIC DNA]</scope>
    <source>
        <strain>Brown Norway</strain>
    </source>
</reference>
<reference key="2">
    <citation type="journal article" date="2003" name="Gene">
        <title>Shadoo, a new protein highly conserved from fish to mammals and with similarity to prion protein.</title>
        <authorList>
            <person name="Premzl M."/>
            <person name="Sangiorgio L."/>
            <person name="Strumbo B."/>
            <person name="Marshall Graves J.A."/>
            <person name="Simonic T."/>
            <person name="Gready J.E."/>
        </authorList>
    </citation>
    <scope>IDENTIFICATION</scope>
    <scope>TISSUE SPECIFICITY</scope>
</reference>
<accession>Q5BIV7</accession>
<proteinExistence type="evidence at transcript level"/>
<feature type="signal peptide" evidence="2">
    <location>
        <begin position="1"/>
        <end position="24"/>
    </location>
</feature>
<feature type="chain" id="PRO_5000096017" description="Shadow of prion protein">
    <location>
        <begin position="25"/>
        <end position="122"/>
    </location>
</feature>
<feature type="propeptide" id="PRO_0000320169" description="Removed in mature form" evidence="2">
    <location>
        <begin position="123"/>
        <end position="147"/>
    </location>
</feature>
<feature type="region of interest" description="Disordered" evidence="3">
    <location>
        <begin position="26"/>
        <end position="46"/>
    </location>
</feature>
<feature type="compositionally biased region" description="Gly residues" evidence="3">
    <location>
        <begin position="26"/>
        <end position="43"/>
    </location>
</feature>
<feature type="lipid moiety-binding region" description="GPI-anchor amidated glycine" evidence="2">
    <location>
        <position position="122"/>
    </location>
</feature>
<feature type="glycosylation site" description="N-linked (GlcNAc...) asparagine" evidence="2">
    <location>
        <position position="107"/>
    </location>
</feature>
<evidence type="ECO:0000250" key="1"/>
<evidence type="ECO:0000255" key="2"/>
<evidence type="ECO:0000256" key="3">
    <source>
        <dbReference type="SAM" id="MobiDB-lite"/>
    </source>
</evidence>
<evidence type="ECO:0000269" key="4">
    <source>
    </source>
</evidence>
<evidence type="ECO:0000305" key="5"/>